<keyword id="KW-0963">Cytoplasm</keyword>
<keyword id="KW-0342">GTP-binding</keyword>
<keyword id="KW-0396">Initiation factor</keyword>
<keyword id="KW-0547">Nucleotide-binding</keyword>
<keyword id="KW-0648">Protein biosynthesis</keyword>
<keyword id="KW-1185">Reference proteome</keyword>
<protein>
    <recommendedName>
        <fullName evidence="2">Translation initiation factor IF-2</fullName>
    </recommendedName>
</protein>
<dbReference type="EMBL" id="CP000251">
    <property type="protein sequence ID" value="ABC80877.1"/>
    <property type="molecule type" value="Genomic_DNA"/>
</dbReference>
<dbReference type="RefSeq" id="WP_011420160.1">
    <property type="nucleotide sequence ID" value="NC_007760.1"/>
</dbReference>
<dbReference type="SMR" id="Q2IPZ7"/>
<dbReference type="STRING" id="290397.Adeh_1102"/>
<dbReference type="KEGG" id="ade:Adeh_1102"/>
<dbReference type="eggNOG" id="COG0532">
    <property type="taxonomic scope" value="Bacteria"/>
</dbReference>
<dbReference type="HOGENOM" id="CLU_006301_9_3_7"/>
<dbReference type="OrthoDB" id="9811804at2"/>
<dbReference type="Proteomes" id="UP000001935">
    <property type="component" value="Chromosome"/>
</dbReference>
<dbReference type="GO" id="GO:0005829">
    <property type="term" value="C:cytosol"/>
    <property type="evidence" value="ECO:0007669"/>
    <property type="project" value="TreeGrafter"/>
</dbReference>
<dbReference type="GO" id="GO:0005525">
    <property type="term" value="F:GTP binding"/>
    <property type="evidence" value="ECO:0007669"/>
    <property type="project" value="UniProtKB-KW"/>
</dbReference>
<dbReference type="GO" id="GO:0003924">
    <property type="term" value="F:GTPase activity"/>
    <property type="evidence" value="ECO:0007669"/>
    <property type="project" value="UniProtKB-UniRule"/>
</dbReference>
<dbReference type="GO" id="GO:0003743">
    <property type="term" value="F:translation initiation factor activity"/>
    <property type="evidence" value="ECO:0007669"/>
    <property type="project" value="UniProtKB-UniRule"/>
</dbReference>
<dbReference type="CDD" id="cd01887">
    <property type="entry name" value="IF2_eIF5B"/>
    <property type="match status" value="1"/>
</dbReference>
<dbReference type="CDD" id="cd03702">
    <property type="entry name" value="IF2_mtIF2_II"/>
    <property type="match status" value="1"/>
</dbReference>
<dbReference type="CDD" id="cd03692">
    <property type="entry name" value="mtIF2_IVc"/>
    <property type="match status" value="1"/>
</dbReference>
<dbReference type="FunFam" id="2.40.30.10:FF:000007">
    <property type="entry name" value="Translation initiation factor IF-2"/>
    <property type="match status" value="1"/>
</dbReference>
<dbReference type="FunFam" id="2.40.30.10:FF:000008">
    <property type="entry name" value="Translation initiation factor IF-2"/>
    <property type="match status" value="1"/>
</dbReference>
<dbReference type="FunFam" id="3.40.50.10050:FF:000001">
    <property type="entry name" value="Translation initiation factor IF-2"/>
    <property type="match status" value="1"/>
</dbReference>
<dbReference type="FunFam" id="3.40.50.300:FF:000019">
    <property type="entry name" value="Translation initiation factor IF-2"/>
    <property type="match status" value="1"/>
</dbReference>
<dbReference type="Gene3D" id="1.10.10.2480">
    <property type="match status" value="1"/>
</dbReference>
<dbReference type="Gene3D" id="3.40.50.300">
    <property type="entry name" value="P-loop containing nucleotide triphosphate hydrolases"/>
    <property type="match status" value="1"/>
</dbReference>
<dbReference type="Gene3D" id="2.40.30.10">
    <property type="entry name" value="Translation factors"/>
    <property type="match status" value="2"/>
</dbReference>
<dbReference type="Gene3D" id="3.40.50.10050">
    <property type="entry name" value="Translation initiation factor IF- 2, domain 3"/>
    <property type="match status" value="1"/>
</dbReference>
<dbReference type="HAMAP" id="MF_00100_B">
    <property type="entry name" value="IF_2_B"/>
    <property type="match status" value="1"/>
</dbReference>
<dbReference type="InterPro" id="IPR053905">
    <property type="entry name" value="EF-G-like_DII"/>
</dbReference>
<dbReference type="InterPro" id="IPR044145">
    <property type="entry name" value="IF2_II"/>
</dbReference>
<dbReference type="InterPro" id="IPR006847">
    <property type="entry name" value="IF2_N"/>
</dbReference>
<dbReference type="InterPro" id="IPR027417">
    <property type="entry name" value="P-loop_NTPase"/>
</dbReference>
<dbReference type="InterPro" id="IPR005225">
    <property type="entry name" value="Small_GTP-bd"/>
</dbReference>
<dbReference type="InterPro" id="IPR000795">
    <property type="entry name" value="T_Tr_GTP-bd_dom"/>
</dbReference>
<dbReference type="InterPro" id="IPR000178">
    <property type="entry name" value="TF_IF2_bacterial-like"/>
</dbReference>
<dbReference type="InterPro" id="IPR015760">
    <property type="entry name" value="TIF_IF2"/>
</dbReference>
<dbReference type="InterPro" id="IPR023115">
    <property type="entry name" value="TIF_IF2_dom3"/>
</dbReference>
<dbReference type="InterPro" id="IPR036925">
    <property type="entry name" value="TIF_IF2_dom3_sf"/>
</dbReference>
<dbReference type="InterPro" id="IPR009000">
    <property type="entry name" value="Transl_B-barrel_sf"/>
</dbReference>
<dbReference type="NCBIfam" id="TIGR00487">
    <property type="entry name" value="IF-2"/>
    <property type="match status" value="1"/>
</dbReference>
<dbReference type="NCBIfam" id="TIGR00231">
    <property type="entry name" value="small_GTP"/>
    <property type="match status" value="1"/>
</dbReference>
<dbReference type="PANTHER" id="PTHR43381:SF5">
    <property type="entry name" value="TR-TYPE G DOMAIN-CONTAINING PROTEIN"/>
    <property type="match status" value="1"/>
</dbReference>
<dbReference type="PANTHER" id="PTHR43381">
    <property type="entry name" value="TRANSLATION INITIATION FACTOR IF-2-RELATED"/>
    <property type="match status" value="1"/>
</dbReference>
<dbReference type="Pfam" id="PF22042">
    <property type="entry name" value="EF-G_D2"/>
    <property type="match status" value="1"/>
</dbReference>
<dbReference type="Pfam" id="PF00009">
    <property type="entry name" value="GTP_EFTU"/>
    <property type="match status" value="1"/>
</dbReference>
<dbReference type="Pfam" id="PF11987">
    <property type="entry name" value="IF-2"/>
    <property type="match status" value="1"/>
</dbReference>
<dbReference type="Pfam" id="PF04760">
    <property type="entry name" value="IF2_N"/>
    <property type="match status" value="1"/>
</dbReference>
<dbReference type="SUPFAM" id="SSF52156">
    <property type="entry name" value="Initiation factor IF2/eIF5b, domain 3"/>
    <property type="match status" value="1"/>
</dbReference>
<dbReference type="SUPFAM" id="SSF52540">
    <property type="entry name" value="P-loop containing nucleoside triphosphate hydrolases"/>
    <property type="match status" value="1"/>
</dbReference>
<dbReference type="SUPFAM" id="SSF50447">
    <property type="entry name" value="Translation proteins"/>
    <property type="match status" value="2"/>
</dbReference>
<dbReference type="PROSITE" id="PS51722">
    <property type="entry name" value="G_TR_2"/>
    <property type="match status" value="1"/>
</dbReference>
<dbReference type="PROSITE" id="PS01176">
    <property type="entry name" value="IF2"/>
    <property type="match status" value="1"/>
</dbReference>
<name>IF2_ANADE</name>
<gene>
    <name evidence="2" type="primary">infB</name>
    <name type="ordered locus">Adeh_1102</name>
</gene>
<feature type="chain" id="PRO_1000008195" description="Translation initiation factor IF-2">
    <location>
        <begin position="1"/>
        <end position="950"/>
    </location>
</feature>
<feature type="domain" description="tr-type G">
    <location>
        <begin position="449"/>
        <end position="618"/>
    </location>
</feature>
<feature type="region of interest" description="Disordered" evidence="3">
    <location>
        <begin position="57"/>
        <end position="254"/>
    </location>
</feature>
<feature type="region of interest" description="Disordered" evidence="3">
    <location>
        <begin position="304"/>
        <end position="328"/>
    </location>
</feature>
<feature type="region of interest" description="G1" evidence="1">
    <location>
        <begin position="458"/>
        <end position="465"/>
    </location>
</feature>
<feature type="region of interest" description="G2" evidence="1">
    <location>
        <begin position="483"/>
        <end position="487"/>
    </location>
</feature>
<feature type="region of interest" description="G3" evidence="1">
    <location>
        <begin position="504"/>
        <end position="507"/>
    </location>
</feature>
<feature type="region of interest" description="G4" evidence="1">
    <location>
        <begin position="558"/>
        <end position="561"/>
    </location>
</feature>
<feature type="region of interest" description="G5" evidence="1">
    <location>
        <begin position="594"/>
        <end position="596"/>
    </location>
</feature>
<feature type="compositionally biased region" description="Low complexity" evidence="3">
    <location>
        <begin position="101"/>
        <end position="131"/>
    </location>
</feature>
<feature type="compositionally biased region" description="Low complexity" evidence="3">
    <location>
        <begin position="139"/>
        <end position="169"/>
    </location>
</feature>
<feature type="compositionally biased region" description="Pro residues" evidence="3">
    <location>
        <begin position="170"/>
        <end position="215"/>
    </location>
</feature>
<feature type="compositionally biased region" description="Low complexity" evidence="3">
    <location>
        <begin position="216"/>
        <end position="233"/>
    </location>
</feature>
<feature type="binding site" evidence="2">
    <location>
        <begin position="458"/>
        <end position="465"/>
    </location>
    <ligand>
        <name>GTP</name>
        <dbReference type="ChEBI" id="CHEBI:37565"/>
    </ligand>
</feature>
<feature type="binding site" evidence="2">
    <location>
        <begin position="504"/>
        <end position="508"/>
    </location>
    <ligand>
        <name>GTP</name>
        <dbReference type="ChEBI" id="CHEBI:37565"/>
    </ligand>
</feature>
<feature type="binding site" evidence="2">
    <location>
        <begin position="558"/>
        <end position="561"/>
    </location>
    <ligand>
        <name>GTP</name>
        <dbReference type="ChEBI" id="CHEBI:37565"/>
    </ligand>
</feature>
<reference key="1">
    <citation type="submission" date="2006-01" db="EMBL/GenBank/DDBJ databases">
        <title>Complete sequence of Anaeromyxobacter dehalogenans 2CP-C.</title>
        <authorList>
            <person name="Copeland A."/>
            <person name="Lucas S."/>
            <person name="Lapidus A."/>
            <person name="Barry K."/>
            <person name="Detter J.C."/>
            <person name="Glavina T."/>
            <person name="Hammon N."/>
            <person name="Israni S."/>
            <person name="Pitluck S."/>
            <person name="Brettin T."/>
            <person name="Bruce D."/>
            <person name="Han C."/>
            <person name="Tapia R."/>
            <person name="Gilna P."/>
            <person name="Kiss H."/>
            <person name="Schmutz J."/>
            <person name="Larimer F."/>
            <person name="Land M."/>
            <person name="Kyrpides N."/>
            <person name="Anderson I."/>
            <person name="Sanford R.A."/>
            <person name="Ritalahti K.M."/>
            <person name="Thomas H.S."/>
            <person name="Kirby J.R."/>
            <person name="Zhulin I.B."/>
            <person name="Loeffler F.E."/>
            <person name="Richardson P."/>
        </authorList>
    </citation>
    <scope>NUCLEOTIDE SEQUENCE [LARGE SCALE GENOMIC DNA]</scope>
    <source>
        <strain>2CP-C</strain>
    </source>
</reference>
<accession>Q2IPZ7</accession>
<organism>
    <name type="scientific">Anaeromyxobacter dehalogenans (strain 2CP-C)</name>
    <dbReference type="NCBI Taxonomy" id="290397"/>
    <lineage>
        <taxon>Bacteria</taxon>
        <taxon>Pseudomonadati</taxon>
        <taxon>Myxococcota</taxon>
        <taxon>Myxococcia</taxon>
        <taxon>Myxococcales</taxon>
        <taxon>Cystobacterineae</taxon>
        <taxon>Anaeromyxobacteraceae</taxon>
        <taxon>Anaeromyxobacter</taxon>
    </lineage>
</organism>
<proteinExistence type="inferred from homology"/>
<sequence>MSKKRVHELGKQLKEQGIELSNQELVEKLHALGYLEVKSHSSSLEDDQAHAAYEKILAERKPKPAPARPSGPGFVVRKRAHVEPPTVTAPAAPPSPEPEYAEPQYAEPQAEQAYEPEPQAAQPEAGAEPAAAPEPPAEAAPLAAQAAPSPGAEAAAPAAPQAQPAQPAAPAAPPAPTAQPSAPPPAAAQPRPPQPSAPSRPPPPGYRPAPPPGARPPVSAAPGAPGQPGAAGQPPRPPVDPRTLRPTSTQAVVISRPLVPVRRVTPPTSARQQFPVAPGPRALGEVRELKVVPGSLGREREFIDVSRDKRRGRQPGRPISEEQAKSLSGKELLQAAISDRAYIPIRGKKKKPTKKGAKTQITEKAEHKKVIRIEESISVSELSQVMGVKASDLIRKLMQMGKMVTINAQIDADTAATLALEHGYTVEKKGFEVEEFIPEVEVDESKLVIRPPVVTVMGHVDHGKTSLLDAIRQADVAAGEAGGITQHIGAYSVNTPQGPITFLDTPGHEAFTAMRQRGAQVTDLVVLVVAADDGVMPQTVESIKAAKAAGVTILVAINKVDKPQAAPERVMQQLTEYELVAEQWGGTTIMLPVSARTKQGIPELLEYIALQSEVLELKANPDKLAAGRVIEAKLEKGRGPVATVLVEEGTLRVGDALVTGVHFGRVRAMMNERGEQVDNVGPGYPVEVLGLSGVPVAGDEFDVVEDEKAAKEVAQHRATKQRQKELGGVKKATLEDLFAKAKTSAQKVLNLVVKADVQGSSEAVSQALEKAATKKVGVKILESAVGAITKSDVLTAAAGNAVIVGFNTKPETEIENIASQQGVKILMFGIIYEAVDRIREEMAGLLEPIIKEKPLGKAEVRQVFNIPRVGQIAGSAVTEGVVKRAGHVRVVRDRKVVFTGKIGSLKRVKDDVREVAQGFECGIGVDGFSDVKQGDVLEVYELEEIRQSLD</sequence>
<evidence type="ECO:0000250" key="1"/>
<evidence type="ECO:0000255" key="2">
    <source>
        <dbReference type="HAMAP-Rule" id="MF_00100"/>
    </source>
</evidence>
<evidence type="ECO:0000256" key="3">
    <source>
        <dbReference type="SAM" id="MobiDB-lite"/>
    </source>
</evidence>
<comment type="function">
    <text evidence="2">One of the essential components for the initiation of protein synthesis. Protects formylmethionyl-tRNA from spontaneous hydrolysis and promotes its binding to the 30S ribosomal subunits. Also involved in the hydrolysis of GTP during the formation of the 70S ribosomal complex.</text>
</comment>
<comment type="subcellular location">
    <subcellularLocation>
        <location evidence="2">Cytoplasm</location>
    </subcellularLocation>
</comment>
<comment type="similarity">
    <text evidence="2">Belongs to the TRAFAC class translation factor GTPase superfamily. Classic translation factor GTPase family. IF-2 subfamily.</text>
</comment>